<gene>
    <name evidence="1" type="primary">rhaS</name>
    <name type="ordered locus">SG3373</name>
</gene>
<organism>
    <name type="scientific">Salmonella gallinarum (strain 287/91 / NCTC 13346)</name>
    <dbReference type="NCBI Taxonomy" id="550538"/>
    <lineage>
        <taxon>Bacteria</taxon>
        <taxon>Pseudomonadati</taxon>
        <taxon>Pseudomonadota</taxon>
        <taxon>Gammaproteobacteria</taxon>
        <taxon>Enterobacterales</taxon>
        <taxon>Enterobacteriaceae</taxon>
        <taxon>Salmonella</taxon>
    </lineage>
</organism>
<protein>
    <recommendedName>
        <fullName evidence="1">HTH-type transcriptional activator RhaS</fullName>
    </recommendedName>
    <alternativeName>
        <fullName evidence="1">L-rhamnose operon regulatory protein RhaS</fullName>
    </alternativeName>
</protein>
<accession>B5RFC3</accession>
<sequence length="278" mass="32089">MTVLHSVDFFPSGKAPVAIEPRLPQAAFPEHHHDFHEIVIVEHGTGIHVFNGQPYTISGGTVCFVRDHDRHLYEHTDNLCLTNVLWRSPDAFQFLAGLDQLLPQEQDGYYPSHWRVNQSVLQQVRQLVGLMERAGDGMDAPAVANREILFMQLLVLLRRSSLMEGATNNDAKLNQLMAWLEDHFAEEVCWEAVAEQFSLSLRTLHRQLKQHTGLTPQRYLNRLRLIKARHLLRHSDHSVTEIAYRCGFGDSNHFSTLFRREFNWSPRDIRQGRDAIIQ</sequence>
<dbReference type="EMBL" id="AM933173">
    <property type="protein sequence ID" value="CAR39166.1"/>
    <property type="molecule type" value="Genomic_DNA"/>
</dbReference>
<dbReference type="RefSeq" id="WP_000217112.1">
    <property type="nucleotide sequence ID" value="NC_011274.1"/>
</dbReference>
<dbReference type="SMR" id="B5RFC3"/>
<dbReference type="KEGG" id="seg:SG3373"/>
<dbReference type="HOGENOM" id="CLU_000445_88_5_6"/>
<dbReference type="Proteomes" id="UP000008321">
    <property type="component" value="Chromosome"/>
</dbReference>
<dbReference type="GO" id="GO:0005737">
    <property type="term" value="C:cytoplasm"/>
    <property type="evidence" value="ECO:0007669"/>
    <property type="project" value="UniProtKB-SubCell"/>
</dbReference>
<dbReference type="GO" id="GO:0003700">
    <property type="term" value="F:DNA-binding transcription factor activity"/>
    <property type="evidence" value="ECO:0007669"/>
    <property type="project" value="UniProtKB-UniRule"/>
</dbReference>
<dbReference type="GO" id="GO:0043565">
    <property type="term" value="F:sequence-specific DNA binding"/>
    <property type="evidence" value="ECO:0007669"/>
    <property type="project" value="InterPro"/>
</dbReference>
<dbReference type="GO" id="GO:0045893">
    <property type="term" value="P:positive regulation of DNA-templated transcription"/>
    <property type="evidence" value="ECO:0007669"/>
    <property type="project" value="UniProtKB-UniRule"/>
</dbReference>
<dbReference type="GO" id="GO:0019299">
    <property type="term" value="P:rhamnose metabolic process"/>
    <property type="evidence" value="ECO:0007669"/>
    <property type="project" value="UniProtKB-UniRule"/>
</dbReference>
<dbReference type="CDD" id="cd06977">
    <property type="entry name" value="cupin_RhaR_RhaS-like_N"/>
    <property type="match status" value="1"/>
</dbReference>
<dbReference type="Gene3D" id="1.10.10.60">
    <property type="entry name" value="Homeodomain-like"/>
    <property type="match status" value="1"/>
</dbReference>
<dbReference type="Gene3D" id="2.60.120.10">
    <property type="entry name" value="Jelly Rolls"/>
    <property type="match status" value="1"/>
</dbReference>
<dbReference type="HAMAP" id="MF_01534">
    <property type="entry name" value="HTH_type_RhaS"/>
    <property type="match status" value="1"/>
</dbReference>
<dbReference type="InterPro" id="IPR003313">
    <property type="entry name" value="AraC-bd"/>
</dbReference>
<dbReference type="InterPro" id="IPR050204">
    <property type="entry name" value="AraC_XylS_family_regulators"/>
</dbReference>
<dbReference type="InterPro" id="IPR009057">
    <property type="entry name" value="Homeodomain-like_sf"/>
</dbReference>
<dbReference type="InterPro" id="IPR037923">
    <property type="entry name" value="HTH-like"/>
</dbReference>
<dbReference type="InterPro" id="IPR018060">
    <property type="entry name" value="HTH_AraC"/>
</dbReference>
<dbReference type="InterPro" id="IPR018062">
    <property type="entry name" value="HTH_AraC-typ_CS"/>
</dbReference>
<dbReference type="InterPro" id="IPR047220">
    <property type="entry name" value="RhaR_RhaS-like_N"/>
</dbReference>
<dbReference type="InterPro" id="IPR014710">
    <property type="entry name" value="RmlC-like_jellyroll"/>
</dbReference>
<dbReference type="InterPro" id="IPR020449">
    <property type="entry name" value="Tscrpt_reg_AraC-type_HTH"/>
</dbReference>
<dbReference type="InterPro" id="IPR023609">
    <property type="entry name" value="Tscrpt_reg_HTH_RhaS"/>
</dbReference>
<dbReference type="NCBIfam" id="NF010028">
    <property type="entry name" value="PRK13503.1"/>
    <property type="match status" value="1"/>
</dbReference>
<dbReference type="PANTHER" id="PTHR46796:SF13">
    <property type="entry name" value="HTH-TYPE TRANSCRIPTIONAL ACTIVATOR RHAS"/>
    <property type="match status" value="1"/>
</dbReference>
<dbReference type="PANTHER" id="PTHR46796">
    <property type="entry name" value="HTH-TYPE TRANSCRIPTIONAL ACTIVATOR RHAS-RELATED"/>
    <property type="match status" value="1"/>
</dbReference>
<dbReference type="Pfam" id="PF02311">
    <property type="entry name" value="AraC_binding"/>
    <property type="match status" value="1"/>
</dbReference>
<dbReference type="Pfam" id="PF12833">
    <property type="entry name" value="HTH_18"/>
    <property type="match status" value="1"/>
</dbReference>
<dbReference type="PRINTS" id="PR00032">
    <property type="entry name" value="HTHARAC"/>
</dbReference>
<dbReference type="SMART" id="SM00342">
    <property type="entry name" value="HTH_ARAC"/>
    <property type="match status" value="1"/>
</dbReference>
<dbReference type="SUPFAM" id="SSF46689">
    <property type="entry name" value="Homeodomain-like"/>
    <property type="match status" value="2"/>
</dbReference>
<dbReference type="SUPFAM" id="SSF51215">
    <property type="entry name" value="Regulatory protein AraC"/>
    <property type="match status" value="1"/>
</dbReference>
<dbReference type="PROSITE" id="PS00041">
    <property type="entry name" value="HTH_ARAC_FAMILY_1"/>
    <property type="match status" value="1"/>
</dbReference>
<dbReference type="PROSITE" id="PS01124">
    <property type="entry name" value="HTH_ARAC_FAMILY_2"/>
    <property type="match status" value="1"/>
</dbReference>
<evidence type="ECO:0000255" key="1">
    <source>
        <dbReference type="HAMAP-Rule" id="MF_01534"/>
    </source>
</evidence>
<keyword id="KW-0010">Activator</keyword>
<keyword id="KW-0963">Cytoplasm</keyword>
<keyword id="KW-0238">DNA-binding</keyword>
<keyword id="KW-0677">Repeat</keyword>
<keyword id="KW-0684">Rhamnose metabolism</keyword>
<keyword id="KW-0804">Transcription</keyword>
<keyword id="KW-0805">Transcription regulation</keyword>
<comment type="function">
    <text evidence="1">Activates expression of the rhaBAD and rhaT operons.</text>
</comment>
<comment type="subunit">
    <text evidence="1">Binds DNA as a dimer.</text>
</comment>
<comment type="subcellular location">
    <subcellularLocation>
        <location evidence="1">Cytoplasm</location>
    </subcellularLocation>
</comment>
<reference key="1">
    <citation type="journal article" date="2008" name="Genome Res.">
        <title>Comparative genome analysis of Salmonella enteritidis PT4 and Salmonella gallinarum 287/91 provides insights into evolutionary and host adaptation pathways.</title>
        <authorList>
            <person name="Thomson N.R."/>
            <person name="Clayton D.J."/>
            <person name="Windhorst D."/>
            <person name="Vernikos G."/>
            <person name="Davidson S."/>
            <person name="Churcher C."/>
            <person name="Quail M.A."/>
            <person name="Stevens M."/>
            <person name="Jones M.A."/>
            <person name="Watson M."/>
            <person name="Barron A."/>
            <person name="Layton A."/>
            <person name="Pickard D."/>
            <person name="Kingsley R.A."/>
            <person name="Bignell A."/>
            <person name="Clark L."/>
            <person name="Harris B."/>
            <person name="Ormond D."/>
            <person name="Abdellah Z."/>
            <person name="Brooks K."/>
            <person name="Cherevach I."/>
            <person name="Chillingworth T."/>
            <person name="Woodward J."/>
            <person name="Norberczak H."/>
            <person name="Lord A."/>
            <person name="Arrowsmith C."/>
            <person name="Jagels K."/>
            <person name="Moule S."/>
            <person name="Mungall K."/>
            <person name="Saunders M."/>
            <person name="Whitehead S."/>
            <person name="Chabalgoity J.A."/>
            <person name="Maskell D."/>
            <person name="Humphreys T."/>
            <person name="Roberts M."/>
            <person name="Barrow P.A."/>
            <person name="Dougan G."/>
            <person name="Parkhill J."/>
        </authorList>
    </citation>
    <scope>NUCLEOTIDE SEQUENCE [LARGE SCALE GENOMIC DNA]</scope>
    <source>
        <strain>287/91 / NCTC 13346</strain>
    </source>
</reference>
<name>RHAS_SALG2</name>
<proteinExistence type="inferred from homology"/>
<feature type="chain" id="PRO_1000200961" description="HTH-type transcriptional activator RhaS">
    <location>
        <begin position="1"/>
        <end position="278"/>
    </location>
</feature>
<feature type="domain" description="HTH araC/xylS-type" evidence="1">
    <location>
        <begin position="174"/>
        <end position="272"/>
    </location>
</feature>
<feature type="DNA-binding region" description="H-T-H motif" evidence="1">
    <location>
        <begin position="191"/>
        <end position="212"/>
    </location>
</feature>
<feature type="DNA-binding region" description="H-T-H motif" evidence="1">
    <location>
        <begin position="239"/>
        <end position="262"/>
    </location>
</feature>
<feature type="site" description="Interaction with sigma-70" evidence="1">
    <location>
        <position position="241"/>
    </location>
</feature>
<feature type="site" description="Interaction with sigma-70" evidence="1">
    <location>
        <position position="250"/>
    </location>
</feature>